<evidence type="ECO:0000255" key="1">
    <source>
        <dbReference type="HAMAP-Rule" id="MF_01103"/>
    </source>
</evidence>
<evidence type="ECO:0000256" key="2">
    <source>
        <dbReference type="SAM" id="MobiDB-lite"/>
    </source>
</evidence>
<gene>
    <name type="ordered locus">Sez_0489</name>
</gene>
<comment type="subcellular location">
    <subcellularLocation>
        <location evidence="1">Cytoplasm</location>
    </subcellularLocation>
</comment>
<comment type="similarity">
    <text evidence="1">Belongs to the UPF0291 family.</text>
</comment>
<feature type="chain" id="PRO_1000137015" description="UPF0291 protein Sez_0489">
    <location>
        <begin position="1"/>
        <end position="85"/>
    </location>
</feature>
<feature type="region of interest" description="Disordered" evidence="2">
    <location>
        <begin position="62"/>
        <end position="85"/>
    </location>
</feature>
<dbReference type="EMBL" id="CP001129">
    <property type="protein sequence ID" value="ACG61861.1"/>
    <property type="molecule type" value="Genomic_DNA"/>
</dbReference>
<dbReference type="RefSeq" id="WP_012515137.1">
    <property type="nucleotide sequence ID" value="NC_011134.1"/>
</dbReference>
<dbReference type="SMR" id="B4U1J4"/>
<dbReference type="KEGG" id="sez:Sez_0489"/>
<dbReference type="HOGENOM" id="CLU_173137_0_2_9"/>
<dbReference type="Proteomes" id="UP000001873">
    <property type="component" value="Chromosome"/>
</dbReference>
<dbReference type="GO" id="GO:0005737">
    <property type="term" value="C:cytoplasm"/>
    <property type="evidence" value="ECO:0007669"/>
    <property type="project" value="UniProtKB-SubCell"/>
</dbReference>
<dbReference type="Gene3D" id="1.10.287.540">
    <property type="entry name" value="Helix hairpin bin"/>
    <property type="match status" value="1"/>
</dbReference>
<dbReference type="HAMAP" id="MF_01103">
    <property type="entry name" value="UPF0291"/>
    <property type="match status" value="1"/>
</dbReference>
<dbReference type="InterPro" id="IPR009242">
    <property type="entry name" value="DUF896"/>
</dbReference>
<dbReference type="NCBIfam" id="NF002711">
    <property type="entry name" value="PRK02539.1"/>
    <property type="match status" value="1"/>
</dbReference>
<dbReference type="PANTHER" id="PTHR37300">
    <property type="entry name" value="UPF0291 PROTEIN CBO2609/CLC_2481"/>
    <property type="match status" value="1"/>
</dbReference>
<dbReference type="PANTHER" id="PTHR37300:SF1">
    <property type="entry name" value="UPF0291 PROTEIN YNZC"/>
    <property type="match status" value="1"/>
</dbReference>
<dbReference type="Pfam" id="PF05979">
    <property type="entry name" value="DUF896"/>
    <property type="match status" value="1"/>
</dbReference>
<dbReference type="SUPFAM" id="SSF158221">
    <property type="entry name" value="YnzC-like"/>
    <property type="match status" value="1"/>
</dbReference>
<protein>
    <recommendedName>
        <fullName evidence="1">UPF0291 protein Sez_0489</fullName>
    </recommendedName>
</protein>
<name>Y489_STREM</name>
<sequence>MDPKKIARINELAKKKKTVGLTGPEKVEQAKLREEYIEGYRRSVRHHIEGIKIVDEDGNDVTPEKLRQVQREKGLHGRSLDDPES</sequence>
<accession>B4U1J4</accession>
<organism>
    <name type="scientific">Streptococcus equi subsp. zooepidemicus (strain MGCS10565)</name>
    <dbReference type="NCBI Taxonomy" id="552526"/>
    <lineage>
        <taxon>Bacteria</taxon>
        <taxon>Bacillati</taxon>
        <taxon>Bacillota</taxon>
        <taxon>Bacilli</taxon>
        <taxon>Lactobacillales</taxon>
        <taxon>Streptococcaceae</taxon>
        <taxon>Streptococcus</taxon>
    </lineage>
</organism>
<reference key="1">
    <citation type="journal article" date="2008" name="PLoS ONE">
        <title>Genome sequence of a lancefield group C Streptococcus zooepidemicus strain causing epidemic nephritis: new information about an old disease.</title>
        <authorList>
            <person name="Beres S.B."/>
            <person name="Sesso R."/>
            <person name="Pinto S.W.L."/>
            <person name="Hoe N.P."/>
            <person name="Porcella S.F."/>
            <person name="Deleo F.R."/>
            <person name="Musser J.M."/>
        </authorList>
    </citation>
    <scope>NUCLEOTIDE SEQUENCE [LARGE SCALE GENOMIC DNA]</scope>
    <source>
        <strain>MGCS10565</strain>
    </source>
</reference>
<keyword id="KW-0963">Cytoplasm</keyword>
<proteinExistence type="inferred from homology"/>